<protein>
    <recommendedName>
        <fullName evidence="4">CRISPR-associated DNA-binding protein Cas12m</fullName>
        <shortName evidence="4">GoCas12m</shortName>
    </recommendedName>
</protein>
<reference evidence="6" key="1">
    <citation type="submission" date="2012-02" db="EMBL/GenBank/DDBJ databases">
        <title>Whole genome shotgun sequence of Gordonia otitidis NBRC 100426.</title>
        <authorList>
            <person name="Yoshida I."/>
            <person name="Hosoyama A."/>
            <person name="Tsuchikane K."/>
            <person name="Katsumata H."/>
            <person name="Yamazaki S."/>
            <person name="Fujita N."/>
        </authorList>
    </citation>
    <scope>NUCLEOTIDE SEQUENCE [LARGE SCALE GENOMIC DNA]</scope>
    <source>
        <strain>DSM 44809 / CCUG 52243 / JCM 12355 / NBRC 100426 / IFM 10032</strain>
    </source>
</reference>
<reference key="2">
    <citation type="journal article" date="2024" name="Nucleic Acids Res.">
        <title>Innate programmable DNA binding by CRISPR-Cas12m effectors enable efficient base editing.</title>
        <authorList>
            <person name="Bigelyte G."/>
            <person name="Duchovska B."/>
            <person name="Zedaveinyte R."/>
            <person name="Sasnauskas G."/>
            <person name="Sinkunas T."/>
            <person name="Dalgediene I."/>
            <person name="Tamulaitiene G."/>
            <person name="Silanskas A."/>
            <person name="Kazlauskas D."/>
            <person name="Valancauskas L."/>
            <person name="Madariaga-Marcos J."/>
            <person name="Seidel R."/>
            <person name="Siksnys V."/>
            <person name="Karvelis T."/>
        </authorList>
    </citation>
    <scope>STRUCTURE BY ELECTRON MICROSCOPY (2.93 ANGSTROMS) OF 1-604 IN COMPLEX WITH CRRNA AND TARGET DNA</scope>
    <scope>FUNCTION IN PLASMID SILENCING</scope>
    <scope>FUNCTION IN PHAGE RESISTANCE</scope>
    <scope>SUBUNIT</scope>
    <scope>DOMAIN</scope>
    <scope>BIOTECHNOLOGY</scope>
    <scope>DNA-BINDING</scope>
    <scope>RNA-BINDING</scope>
    <source>
        <strain>DSM 44809 / CCUG 52243 / JCM 12355 / NBRC 100426 / IFM 10032</strain>
    </source>
</reference>
<comment type="function">
    <text evidence="3 5">CRISPR (clustered regularly interspaced short palindromic repeat), is an adaptive immune system that provides protection against mobile genetic elements (viruses, transposable elements and conjugative plasmids) (PubMed:38261981). CRISPR clusters contain sequences complementary to antecedent mobile elements and target invading nucleic acids (PubMed:38261981). CRISPR clusters are transcribed and processed into CRISPR RNA (crRNA) (PubMed:38261981). Recognizes a short motif in the CRISPR repeat sequences (the 5' PAM or protospacer adjacent motif, 5'-TTN-3' in this organism) to help distinguish self versus nonself, as targets within the bacterial CRISPR locus do not have PAMs (PubMed:38261981). Upon expression in E.coli as a CRISPR locus inhibits plasmid propagation when targeted to regions essential for plasmid propagation (replication origin and a selectable marker); inhibits expression of a non-selectable marker, probably at the transcriptional level (PubMed:38261981). Protects E.coli against bacteriophage M13mp18, to a lesser extent against lambda and VpaE1 as well as phage T4 with hydroxymethyl or unmodified (but not glycosylated) cytosines (PubMed:38261981). Preferentially binds to its associated crRNA (PubMed:38261981). Cas12m-crRNA binds DNA in a PAM-dependent, crRNA-guided fashion (PubMed:38261981). Binds a 20-bp crRNA-ss-target DNA heteroduplex, in a 52 nucleotide crRNA (PubMed:38261981). No dsDNA, ssDNA or RNA nuclease activity is seen for the crRNA-Cas12m complex (PubMed:38261981). Probably required for pre-crRNA processing to mature crRNA (Probable) (PubMed:38261981).</text>
</comment>
<comment type="cofactor">
    <cofactor evidence="1">
        <name>Mg(2+)</name>
        <dbReference type="ChEBI" id="CHEBI:18420"/>
    </cofactor>
    <text evidence="1">Binds only 1 Mg(2+) as opposed to 2 usually seen in other Cas12 enzymes; lack of the second Mg(2+) results in loss of target DNA cleavage activity.</text>
</comment>
<comment type="cofactor">
    <cofactor evidence="1">
        <name>Zn(2+)</name>
        <dbReference type="ChEBI" id="CHEBI:29105"/>
    </cofactor>
    <text evidence="1">Binds 1 Zn(2+) within the target nucleic-acid binding (TNB) domain.</text>
</comment>
<comment type="subunit">
    <text evidence="3">Binds crRNA and target dsDNA as a monomer (PubMed:38261981).</text>
</comment>
<comment type="domain">
    <text evidence="3">Has a bilobed structure, with a recognition (REC) lobe and nuclease (NUC) lobe (PubMed:38261981). The REC lobe (residues 1-315) is formed by the discontinuous wedge (WED) and recognition (REC) domains, while the NUC lobe (residues 316-607) is formed by the discontinuous RuvC and target nucleic-acid binding (TNB) domains with a zinc finger domain (PubMed:38261981). The crRNA-single-strand target DNA duplex is bound in the central channel between the 2 lobes (PubMed:38261981).</text>
</comment>
<comment type="biotechnology">
    <text evidence="3">Has been repurposed to perform A-to-G base editing by fusion with the TadA-8e adenine deaminase and tested in E.coli and in human cells (PubMed:38261981). The small size of this protein may facilitate its delivery by adeno-associated viruses (PubMed:38261981).</text>
</comment>
<comment type="miscellaneous">
    <text evidence="5">Part of a type V-M CRISPR-Cas system.</text>
</comment>
<comment type="similarity">
    <text evidence="4">Belongs to the CRISPR-associated DNA-binding protein Cas12m family.</text>
</comment>
<proteinExistence type="evidence at protein level"/>
<accession>H5TRP0</accession>
<organism>
    <name type="scientific">Gordonia otitidis (strain DSM 44809 / CCUG 52243 / JCM 12355 / NBRC 100426 / IFM 10032)</name>
    <dbReference type="NCBI Taxonomy" id="1108044"/>
    <lineage>
        <taxon>Bacteria</taxon>
        <taxon>Bacillati</taxon>
        <taxon>Actinomycetota</taxon>
        <taxon>Actinomycetes</taxon>
        <taxon>Mycobacteriales</taxon>
        <taxon>Gordoniaceae</taxon>
        <taxon>Gordonia</taxon>
    </lineage>
</organism>
<dbReference type="EMBL" id="BAFB01000202">
    <property type="protein sequence ID" value="GAB36148.1"/>
    <property type="molecule type" value="Genomic_DNA"/>
</dbReference>
<dbReference type="PDB" id="8PM4">
    <property type="method" value="EM"/>
    <property type="resolution" value="2.93 A"/>
    <property type="chains" value="A=1-604"/>
</dbReference>
<dbReference type="PDBsum" id="8PM4"/>
<dbReference type="EMDB" id="EMD-17757"/>
<dbReference type="SMR" id="H5TRP0"/>
<dbReference type="STRING" id="1108044.GOOTI_202_00040"/>
<dbReference type="Proteomes" id="UP000005038">
    <property type="component" value="Unassembled WGS sequence"/>
</dbReference>
<dbReference type="GO" id="GO:0003677">
    <property type="term" value="F:DNA binding"/>
    <property type="evidence" value="ECO:0007669"/>
    <property type="project" value="UniProtKB-KW"/>
</dbReference>
<dbReference type="GO" id="GO:0046872">
    <property type="term" value="F:metal ion binding"/>
    <property type="evidence" value="ECO:0007669"/>
    <property type="project" value="UniProtKB-KW"/>
</dbReference>
<dbReference type="GO" id="GO:0003723">
    <property type="term" value="F:RNA binding"/>
    <property type="evidence" value="ECO:0007669"/>
    <property type="project" value="UniProtKB-KW"/>
</dbReference>
<dbReference type="GO" id="GO:0051607">
    <property type="term" value="P:defense response to virus"/>
    <property type="evidence" value="ECO:0007669"/>
    <property type="project" value="UniProtKB-KW"/>
</dbReference>
<feature type="chain" id="PRO_0000460483" description="CRISPR-associated DNA-binding protein Cas12m">
    <location>
        <begin position="1"/>
        <end position="607"/>
    </location>
</feature>
<feature type="region of interest" description="Wedge domain (WED-N)" evidence="3">
    <location>
        <begin position="1"/>
        <end position="16"/>
    </location>
</feature>
<feature type="region of interest" description="Recognition domain (REC)" evidence="3">
    <location>
        <begin position="17"/>
        <end position="189"/>
    </location>
</feature>
<feature type="region of interest" description="Roof in REC" evidence="3">
    <location>
        <begin position="50"/>
        <end position="124"/>
    </location>
</feature>
<feature type="region of interest" description="Disordered" evidence="2">
    <location>
        <begin position="74"/>
        <end position="94"/>
    </location>
</feature>
<feature type="region of interest" description="Wedge domain (WED-C)" evidence="3">
    <location>
        <begin position="190"/>
        <end position="315"/>
    </location>
</feature>
<feature type="region of interest" description="RuvC-I" evidence="3">
    <location>
        <begin position="316"/>
        <end position="559"/>
    </location>
</feature>
<feature type="region of interest" description="RuvC insertion" evidence="3">
    <location>
        <begin position="391"/>
        <end position="452"/>
    </location>
</feature>
<feature type="region of interest" description="Target nucleic-acid binding (TNB)" evidence="1">
    <location>
        <begin position="552"/>
        <end position="588"/>
    </location>
</feature>
<feature type="region of interest" description="RuvC-II" evidence="3">
    <location>
        <begin position="589"/>
        <end position="607"/>
    </location>
</feature>
<feature type="compositionally biased region" description="Basic and acidic residues" evidence="2">
    <location>
        <begin position="74"/>
        <end position="83"/>
    </location>
</feature>
<feature type="binding site" evidence="1">
    <location>
        <position position="560"/>
    </location>
    <ligand>
        <name>Zn(2+)</name>
        <dbReference type="ChEBI" id="CHEBI:29105"/>
    </ligand>
</feature>
<feature type="binding site" evidence="1">
    <location>
        <position position="563"/>
    </location>
    <ligand>
        <name>Zn(2+)</name>
        <dbReference type="ChEBI" id="CHEBI:29105"/>
    </ligand>
</feature>
<feature type="binding site" evidence="1">
    <location>
        <position position="580"/>
    </location>
    <ligand>
        <name>Zn(2+)</name>
        <dbReference type="ChEBI" id="CHEBI:29105"/>
    </ligand>
</feature>
<feature type="binding site" evidence="1">
    <location>
        <position position="583"/>
    </location>
    <ligand>
        <name>Zn(2+)</name>
        <dbReference type="ChEBI" id="CHEBI:29105"/>
    </ligand>
</feature>
<feature type="binding site" evidence="1">
    <location>
        <position position="590"/>
    </location>
    <ligand>
        <name>Mg(2+)</name>
        <dbReference type="ChEBI" id="CHEBI:18420"/>
    </ligand>
</feature>
<feature type="strand" evidence="7">
    <location>
        <begin position="3"/>
        <end position="11"/>
    </location>
</feature>
<feature type="helix" evidence="7">
    <location>
        <begin position="19"/>
        <end position="52"/>
    </location>
</feature>
<feature type="helix" evidence="7">
    <location>
        <begin position="54"/>
        <end position="83"/>
    </location>
</feature>
<feature type="turn" evidence="7">
    <location>
        <begin position="84"/>
        <end position="86"/>
    </location>
</feature>
<feature type="helix" evidence="7">
    <location>
        <begin position="92"/>
        <end position="118"/>
    </location>
</feature>
<feature type="helix" evidence="7">
    <location>
        <begin position="120"/>
        <end position="122"/>
    </location>
</feature>
<feature type="helix" evidence="7">
    <location>
        <begin position="123"/>
        <end position="144"/>
    </location>
</feature>
<feature type="helix" evidence="7">
    <location>
        <begin position="152"/>
        <end position="174"/>
    </location>
</feature>
<feature type="strand" evidence="7">
    <location>
        <begin position="190"/>
        <end position="195"/>
    </location>
</feature>
<feature type="helix" evidence="7">
    <location>
        <begin position="207"/>
        <end position="211"/>
    </location>
</feature>
<feature type="turn" evidence="7">
    <location>
        <begin position="213"/>
        <end position="215"/>
    </location>
</feature>
<feature type="turn" evidence="7">
    <location>
        <begin position="217"/>
        <end position="221"/>
    </location>
</feature>
<feature type="helix" evidence="7">
    <location>
        <begin position="229"/>
        <end position="234"/>
    </location>
</feature>
<feature type="helix" evidence="7">
    <location>
        <begin position="237"/>
        <end position="243"/>
    </location>
</feature>
<feature type="strand" evidence="7">
    <location>
        <begin position="245"/>
        <end position="256"/>
    </location>
</feature>
<feature type="strand" evidence="7">
    <location>
        <begin position="262"/>
        <end position="272"/>
    </location>
</feature>
<feature type="strand" evidence="7">
    <location>
        <begin position="282"/>
        <end position="293"/>
    </location>
</feature>
<feature type="strand" evidence="7">
    <location>
        <begin position="296"/>
        <end position="307"/>
    </location>
</feature>
<feature type="strand" evidence="7">
    <location>
        <begin position="318"/>
        <end position="326"/>
    </location>
</feature>
<feature type="strand" evidence="7">
    <location>
        <begin position="329"/>
        <end position="331"/>
    </location>
</feature>
<feature type="strand" evidence="7">
    <location>
        <begin position="333"/>
        <end position="341"/>
    </location>
</feature>
<feature type="helix" evidence="7">
    <location>
        <begin position="347"/>
        <end position="349"/>
    </location>
</feature>
<feature type="turn" evidence="7">
    <location>
        <begin position="350"/>
        <end position="352"/>
    </location>
</feature>
<feature type="strand" evidence="7">
    <location>
        <begin position="353"/>
        <end position="357"/>
    </location>
</feature>
<feature type="strand" evidence="7">
    <location>
        <begin position="361"/>
        <end position="366"/>
    </location>
</feature>
<feature type="helix" evidence="7">
    <location>
        <begin position="369"/>
        <end position="403"/>
    </location>
</feature>
<feature type="helix" evidence="7">
    <location>
        <begin position="417"/>
        <end position="421"/>
    </location>
</feature>
<feature type="helix" evidence="7">
    <location>
        <begin position="426"/>
        <end position="438"/>
    </location>
</feature>
<feature type="helix" evidence="7">
    <location>
        <begin position="445"/>
        <end position="490"/>
    </location>
</feature>
<feature type="strand" evidence="7">
    <location>
        <begin position="492"/>
        <end position="497"/>
    </location>
</feature>
<feature type="helix" evidence="7">
    <location>
        <begin position="501"/>
        <end position="506"/>
    </location>
</feature>
<feature type="helix" evidence="7">
    <location>
        <begin position="507"/>
        <end position="510"/>
    </location>
</feature>
<feature type="strand" evidence="7">
    <location>
        <begin position="511"/>
        <end position="513"/>
    </location>
</feature>
<feature type="helix" evidence="7">
    <location>
        <begin position="515"/>
        <end position="528"/>
    </location>
</feature>
<feature type="helix" evidence="7">
    <location>
        <begin position="530"/>
        <end position="543"/>
    </location>
</feature>
<feature type="strand" evidence="7">
    <location>
        <begin position="548"/>
        <end position="551"/>
    </location>
</feature>
<feature type="turn" evidence="7">
    <location>
        <begin position="554"/>
        <end position="558"/>
    </location>
</feature>
<feature type="turn" evidence="7">
    <location>
        <begin position="561"/>
        <end position="563"/>
    </location>
</feature>
<feature type="strand" evidence="7">
    <location>
        <begin position="574"/>
        <end position="579"/>
    </location>
</feature>
<feature type="turn" evidence="7">
    <location>
        <begin position="581"/>
        <end position="583"/>
    </location>
</feature>
<feature type="helix" evidence="7">
    <location>
        <begin position="589"/>
        <end position="603"/>
    </location>
</feature>
<keyword id="KW-0002">3D-structure</keyword>
<keyword id="KW-0051">Antiviral defense</keyword>
<keyword id="KW-0238">DNA-binding</keyword>
<keyword id="KW-0460">Magnesium</keyword>
<keyword id="KW-0479">Metal-binding</keyword>
<keyword id="KW-0694">RNA-binding</keyword>
<keyword id="KW-0804">Transcription</keyword>
<keyword id="KW-0805">Transcription regulation</keyword>
<keyword id="KW-0862">Zinc</keyword>
<evidence type="ECO:0000250" key="1">
    <source>
        <dbReference type="UniProtKB" id="P0DXB1"/>
    </source>
</evidence>
<evidence type="ECO:0000256" key="2">
    <source>
        <dbReference type="SAM" id="MobiDB-lite"/>
    </source>
</evidence>
<evidence type="ECO:0000269" key="3">
    <source>
    </source>
</evidence>
<evidence type="ECO:0000303" key="4">
    <source>
    </source>
</evidence>
<evidence type="ECO:0000305" key="5">
    <source>
    </source>
</evidence>
<evidence type="ECO:0000312" key="6">
    <source>
        <dbReference type="EMBL" id="GAB36148.1"/>
    </source>
</evidence>
<evidence type="ECO:0007829" key="7">
    <source>
        <dbReference type="PDB" id="8PM4"/>
    </source>
</evidence>
<name>CS12M_GORO1</name>
<sequence length="607" mass="67615">MTRVTVQTAGVHYKWQMPDQLTQQLRLAHDLREDLVTLEYEYEDAVKAVWSSYPAVAALEAQVAELDERASELASTVKEEKSRQRTKRPSHPAVAQLAETRAQLKAAKASRREAIASVRDEATERLRTISDERYAAQKQLYRDYCTDGLLYWATFNAVLDHHKTAVKRIAAHRKQGRAAQLRHHRWDGTGTISVQLQRQATDPARTPAIIADADTGKWRSSLIVPWVNPDVWDTMDRASRRKAGRVVIRMRCGSSRNPDGTKTSEWIDVPVQQHRMLPADADITAAQLTVRREGADLRATIGITAKIPDQGEVDEGPTIAVHLGWRSSDHGTVVATWRSTEPLDIPETLRGVITTQSAERTVGSIVVPHRIEQRVHHHATVASHRDLAVDSIRDTLVAWLTEHGPQPHPYDGDPITAASVQRWKAPRRFAWLALQWRDTPPPEGADIAETLEAWRRADKKLWLESEHGRGRALRHRTDLHRQVAAYFAGVAGRIVVDDSDIAQIAGTAKHSELLTDVDRQIARRRAIAAPGMLRAAIVAAATRDEVPTTTVSHTGLSRVHAACGHENPADDRYLMQPVLCDGCGRTYDTDLSATILMLQRASAATSN</sequence>
<gene>
    <name evidence="4" type="primary">cas12m</name>
    <name evidence="6" type="ORF">GOOTI_202_00040</name>
</gene>